<organism>
    <name type="scientific">Shewanella amazonensis (strain ATCC BAA-1098 / SB2B)</name>
    <dbReference type="NCBI Taxonomy" id="326297"/>
    <lineage>
        <taxon>Bacteria</taxon>
        <taxon>Pseudomonadati</taxon>
        <taxon>Pseudomonadota</taxon>
        <taxon>Gammaproteobacteria</taxon>
        <taxon>Alteromonadales</taxon>
        <taxon>Shewanellaceae</taxon>
        <taxon>Shewanella</taxon>
    </lineage>
</organism>
<evidence type="ECO:0000255" key="1">
    <source>
        <dbReference type="HAMAP-Rule" id="MF_00020"/>
    </source>
</evidence>
<gene>
    <name evidence="1" type="primary">ackA</name>
    <name type="ordered locus">Sama_1495</name>
</gene>
<keyword id="KW-0067">ATP-binding</keyword>
<keyword id="KW-0963">Cytoplasm</keyword>
<keyword id="KW-0418">Kinase</keyword>
<keyword id="KW-0460">Magnesium</keyword>
<keyword id="KW-0479">Metal-binding</keyword>
<keyword id="KW-0547">Nucleotide-binding</keyword>
<keyword id="KW-1185">Reference proteome</keyword>
<keyword id="KW-0808">Transferase</keyword>
<proteinExistence type="inferred from homology"/>
<accession>A1S5P6</accession>
<reference key="1">
    <citation type="submission" date="2006-12" db="EMBL/GenBank/DDBJ databases">
        <title>Complete sequence of Shewanella amazonensis SB2B.</title>
        <authorList>
            <consortium name="US DOE Joint Genome Institute"/>
            <person name="Copeland A."/>
            <person name="Lucas S."/>
            <person name="Lapidus A."/>
            <person name="Barry K."/>
            <person name="Detter J.C."/>
            <person name="Glavina del Rio T."/>
            <person name="Hammon N."/>
            <person name="Israni S."/>
            <person name="Dalin E."/>
            <person name="Tice H."/>
            <person name="Pitluck S."/>
            <person name="Munk A.C."/>
            <person name="Brettin T."/>
            <person name="Bruce D."/>
            <person name="Han C."/>
            <person name="Tapia R."/>
            <person name="Gilna P."/>
            <person name="Schmutz J."/>
            <person name="Larimer F."/>
            <person name="Land M."/>
            <person name="Hauser L."/>
            <person name="Kyrpides N."/>
            <person name="Mikhailova N."/>
            <person name="Fredrickson J."/>
            <person name="Richardson P."/>
        </authorList>
    </citation>
    <scope>NUCLEOTIDE SEQUENCE [LARGE SCALE GENOMIC DNA]</scope>
    <source>
        <strain>ATCC BAA-1098 / SB2B</strain>
    </source>
</reference>
<dbReference type="EC" id="2.7.2.1" evidence="1"/>
<dbReference type="EMBL" id="CP000507">
    <property type="protein sequence ID" value="ABL99702.1"/>
    <property type="molecule type" value="Genomic_DNA"/>
</dbReference>
<dbReference type="RefSeq" id="WP_011759610.1">
    <property type="nucleotide sequence ID" value="NC_008700.1"/>
</dbReference>
<dbReference type="SMR" id="A1S5P6"/>
<dbReference type="STRING" id="326297.Sama_1495"/>
<dbReference type="KEGG" id="saz:Sama_1495"/>
<dbReference type="eggNOG" id="COG0282">
    <property type="taxonomic scope" value="Bacteria"/>
</dbReference>
<dbReference type="HOGENOM" id="CLU_020352_0_1_6"/>
<dbReference type="OrthoDB" id="9802453at2"/>
<dbReference type="UniPathway" id="UPA00340">
    <property type="reaction ID" value="UER00458"/>
</dbReference>
<dbReference type="Proteomes" id="UP000009175">
    <property type="component" value="Chromosome"/>
</dbReference>
<dbReference type="GO" id="GO:0005829">
    <property type="term" value="C:cytosol"/>
    <property type="evidence" value="ECO:0007669"/>
    <property type="project" value="TreeGrafter"/>
</dbReference>
<dbReference type="GO" id="GO:0008776">
    <property type="term" value="F:acetate kinase activity"/>
    <property type="evidence" value="ECO:0007669"/>
    <property type="project" value="UniProtKB-UniRule"/>
</dbReference>
<dbReference type="GO" id="GO:0005524">
    <property type="term" value="F:ATP binding"/>
    <property type="evidence" value="ECO:0007669"/>
    <property type="project" value="UniProtKB-KW"/>
</dbReference>
<dbReference type="GO" id="GO:0000287">
    <property type="term" value="F:magnesium ion binding"/>
    <property type="evidence" value="ECO:0007669"/>
    <property type="project" value="UniProtKB-UniRule"/>
</dbReference>
<dbReference type="GO" id="GO:0006083">
    <property type="term" value="P:acetate metabolic process"/>
    <property type="evidence" value="ECO:0007669"/>
    <property type="project" value="TreeGrafter"/>
</dbReference>
<dbReference type="GO" id="GO:0006085">
    <property type="term" value="P:acetyl-CoA biosynthetic process"/>
    <property type="evidence" value="ECO:0007669"/>
    <property type="project" value="UniProtKB-UniRule"/>
</dbReference>
<dbReference type="CDD" id="cd24010">
    <property type="entry name" value="ASKHA_NBD_AcK_PK"/>
    <property type="match status" value="1"/>
</dbReference>
<dbReference type="FunFam" id="3.30.420.40:FF:000041">
    <property type="entry name" value="Acetate kinase"/>
    <property type="match status" value="1"/>
</dbReference>
<dbReference type="Gene3D" id="3.30.420.40">
    <property type="match status" value="2"/>
</dbReference>
<dbReference type="HAMAP" id="MF_00020">
    <property type="entry name" value="Acetate_kinase"/>
    <property type="match status" value="1"/>
</dbReference>
<dbReference type="InterPro" id="IPR004372">
    <property type="entry name" value="Ac/propionate_kinase"/>
</dbReference>
<dbReference type="InterPro" id="IPR000890">
    <property type="entry name" value="Aliphatic_acid_kin_short-chain"/>
</dbReference>
<dbReference type="InterPro" id="IPR023865">
    <property type="entry name" value="Aliphatic_acid_kinase_CS"/>
</dbReference>
<dbReference type="InterPro" id="IPR043129">
    <property type="entry name" value="ATPase_NBD"/>
</dbReference>
<dbReference type="NCBIfam" id="TIGR00016">
    <property type="entry name" value="ackA"/>
    <property type="match status" value="1"/>
</dbReference>
<dbReference type="PANTHER" id="PTHR21060">
    <property type="entry name" value="ACETATE KINASE"/>
    <property type="match status" value="1"/>
</dbReference>
<dbReference type="PANTHER" id="PTHR21060:SF21">
    <property type="entry name" value="ACETATE KINASE"/>
    <property type="match status" value="1"/>
</dbReference>
<dbReference type="Pfam" id="PF00871">
    <property type="entry name" value="Acetate_kinase"/>
    <property type="match status" value="1"/>
</dbReference>
<dbReference type="PIRSF" id="PIRSF000722">
    <property type="entry name" value="Acetate_prop_kin"/>
    <property type="match status" value="1"/>
</dbReference>
<dbReference type="PRINTS" id="PR00471">
    <property type="entry name" value="ACETATEKNASE"/>
</dbReference>
<dbReference type="SUPFAM" id="SSF53067">
    <property type="entry name" value="Actin-like ATPase domain"/>
    <property type="match status" value="2"/>
</dbReference>
<dbReference type="PROSITE" id="PS01075">
    <property type="entry name" value="ACETATE_KINASE_1"/>
    <property type="match status" value="1"/>
</dbReference>
<dbReference type="PROSITE" id="PS01076">
    <property type="entry name" value="ACETATE_KINASE_2"/>
    <property type="match status" value="1"/>
</dbReference>
<name>ACKA_SHEAM</name>
<protein>
    <recommendedName>
        <fullName evidence="1">Acetate kinase</fullName>
        <ecNumber evidence="1">2.7.2.1</ecNumber>
    </recommendedName>
    <alternativeName>
        <fullName evidence="1">Acetokinase</fullName>
    </alternativeName>
</protein>
<feature type="chain" id="PRO_1000002251" description="Acetate kinase">
    <location>
        <begin position="1"/>
        <end position="399"/>
    </location>
</feature>
<feature type="active site" description="Proton donor/acceptor" evidence="1">
    <location>
        <position position="148"/>
    </location>
</feature>
<feature type="binding site" evidence="1">
    <location>
        <position position="10"/>
    </location>
    <ligand>
        <name>Mg(2+)</name>
        <dbReference type="ChEBI" id="CHEBI:18420"/>
    </ligand>
</feature>
<feature type="binding site" evidence="1">
    <location>
        <position position="17"/>
    </location>
    <ligand>
        <name>ATP</name>
        <dbReference type="ChEBI" id="CHEBI:30616"/>
    </ligand>
</feature>
<feature type="binding site" evidence="1">
    <location>
        <position position="91"/>
    </location>
    <ligand>
        <name>substrate</name>
    </ligand>
</feature>
<feature type="binding site" evidence="1">
    <location>
        <begin position="208"/>
        <end position="212"/>
    </location>
    <ligand>
        <name>ATP</name>
        <dbReference type="ChEBI" id="CHEBI:30616"/>
    </ligand>
</feature>
<feature type="binding site" evidence="1">
    <location>
        <begin position="283"/>
        <end position="285"/>
    </location>
    <ligand>
        <name>ATP</name>
        <dbReference type="ChEBI" id="CHEBI:30616"/>
    </ligand>
</feature>
<feature type="binding site" evidence="1">
    <location>
        <begin position="331"/>
        <end position="335"/>
    </location>
    <ligand>
        <name>ATP</name>
        <dbReference type="ChEBI" id="CHEBI:30616"/>
    </ligand>
</feature>
<feature type="binding site" evidence="1">
    <location>
        <position position="385"/>
    </location>
    <ligand>
        <name>Mg(2+)</name>
        <dbReference type="ChEBI" id="CHEBI:18420"/>
    </ligand>
</feature>
<feature type="site" description="Transition state stabilizer" evidence="1">
    <location>
        <position position="180"/>
    </location>
</feature>
<feature type="site" description="Transition state stabilizer" evidence="1">
    <location>
        <position position="241"/>
    </location>
</feature>
<comment type="function">
    <text evidence="1">Catalyzes the formation of acetyl phosphate from acetate and ATP. Can also catalyze the reverse reaction.</text>
</comment>
<comment type="catalytic activity">
    <reaction evidence="1">
        <text>acetate + ATP = acetyl phosphate + ADP</text>
        <dbReference type="Rhea" id="RHEA:11352"/>
        <dbReference type="ChEBI" id="CHEBI:22191"/>
        <dbReference type="ChEBI" id="CHEBI:30089"/>
        <dbReference type="ChEBI" id="CHEBI:30616"/>
        <dbReference type="ChEBI" id="CHEBI:456216"/>
        <dbReference type="EC" id="2.7.2.1"/>
    </reaction>
</comment>
<comment type="cofactor">
    <cofactor evidence="1">
        <name>Mg(2+)</name>
        <dbReference type="ChEBI" id="CHEBI:18420"/>
    </cofactor>
    <cofactor evidence="1">
        <name>Mn(2+)</name>
        <dbReference type="ChEBI" id="CHEBI:29035"/>
    </cofactor>
    <text evidence="1">Mg(2+). Can also accept Mn(2+).</text>
</comment>
<comment type="pathway">
    <text evidence="1">Metabolic intermediate biosynthesis; acetyl-CoA biosynthesis; acetyl-CoA from acetate: step 1/2.</text>
</comment>
<comment type="subunit">
    <text evidence="1">Homodimer.</text>
</comment>
<comment type="subcellular location">
    <subcellularLocation>
        <location evidence="1">Cytoplasm</location>
    </subcellularLocation>
</comment>
<comment type="similarity">
    <text evidence="1">Belongs to the acetokinase family.</text>
</comment>
<sequence>MSNTLVLVLNCGSSSLKFAILDATNGDEKISGLAECFGLENARIKWKLRGEKHEASLGAFSAHREAVEYIVNKILVNEPELKGQLIAIGHRIVHGGEKFTHSVIIDDAVLKGIEDCASLAPLHNPAHLIGIRAAQASFPSLPQVAVFDTAFHQSMPDRAYIYALPYKLYREHGIRRYGMHGTSHLFVSREAAKALGKDVNDTNVICAHLGNGASVTAVKGGKSVDTSMGLTPLEGLVMGTRCGDLDPSIIYHLVHQLGYTLDEVNNLMNKQSGLLGISELTNDCRGIEEGYAEGHKGATLALEIFCYRLAKYIASYTVPLGRLDAIVFTGGIGENSDLIREKVLNLLEIFKFEVDSERNKAARFGNQGVITKEGSPIAMVIPTNEEWVIAEDSLRLVNK</sequence>